<evidence type="ECO:0000255" key="1">
    <source>
        <dbReference type="HAMAP-Rule" id="MF_01220"/>
    </source>
</evidence>
<comment type="function">
    <text evidence="1">Catalyzes the reversible phosphorylation of UMP to UDP.</text>
</comment>
<comment type="catalytic activity">
    <reaction evidence="1">
        <text>UMP + ATP = UDP + ADP</text>
        <dbReference type="Rhea" id="RHEA:24400"/>
        <dbReference type="ChEBI" id="CHEBI:30616"/>
        <dbReference type="ChEBI" id="CHEBI:57865"/>
        <dbReference type="ChEBI" id="CHEBI:58223"/>
        <dbReference type="ChEBI" id="CHEBI:456216"/>
        <dbReference type="EC" id="2.7.4.22"/>
    </reaction>
</comment>
<comment type="activity regulation">
    <text evidence="1">Allosterically activated by GTP. Inhibited by UTP.</text>
</comment>
<comment type="pathway">
    <text evidence="1">Pyrimidine metabolism; CTP biosynthesis via de novo pathway; UDP from UMP (UMPK route): step 1/1.</text>
</comment>
<comment type="subunit">
    <text evidence="1">Homohexamer.</text>
</comment>
<comment type="subcellular location">
    <subcellularLocation>
        <location evidence="1">Cytoplasm</location>
    </subcellularLocation>
</comment>
<comment type="similarity">
    <text evidence="1">Belongs to the UMP kinase family.</text>
</comment>
<organism>
    <name type="scientific">Vibrio cholerae serotype O1 (strain ATCC 39315 / El Tor Inaba N16961)</name>
    <dbReference type="NCBI Taxonomy" id="243277"/>
    <lineage>
        <taxon>Bacteria</taxon>
        <taxon>Pseudomonadati</taxon>
        <taxon>Pseudomonadota</taxon>
        <taxon>Gammaproteobacteria</taxon>
        <taxon>Vibrionales</taxon>
        <taxon>Vibrionaceae</taxon>
        <taxon>Vibrio</taxon>
    </lineage>
</organism>
<name>PYRH_VIBCH</name>
<sequence>MTTNPKPAYQRILLKLSGEALQGSEGFGIDPTVLDRMAQEVKELVELGVQVGVVIGGGNLFRGAGLAKAGMNRVVGDHMGMLATVMNGLAMRDALHRAYVNARLMSAIPLNGVCDDYSWSDAIRELRQGRVVIFAAGTGNPFFTTDSAACLRGIEIEADVVLKATKVDGVYSADPVANPDAQLYDKLAYNDVLEKELKVMDLAAFTLARDHKMPIRVFNMNKPGALRRVVMGEAEGTLISDVQ</sequence>
<keyword id="KW-0021">Allosteric enzyme</keyword>
<keyword id="KW-0067">ATP-binding</keyword>
<keyword id="KW-0963">Cytoplasm</keyword>
<keyword id="KW-0418">Kinase</keyword>
<keyword id="KW-0547">Nucleotide-binding</keyword>
<keyword id="KW-0665">Pyrimidine biosynthesis</keyword>
<keyword id="KW-1185">Reference proteome</keyword>
<keyword id="KW-0808">Transferase</keyword>
<proteinExistence type="inferred from homology"/>
<accession>Q9KPV4</accession>
<protein>
    <recommendedName>
        <fullName evidence="1">Uridylate kinase</fullName>
        <shortName evidence="1">UK</shortName>
        <ecNumber evidence="1">2.7.4.22</ecNumber>
    </recommendedName>
    <alternativeName>
        <fullName evidence="1">Uridine monophosphate kinase</fullName>
        <shortName evidence="1">UMP kinase</shortName>
        <shortName evidence="1">UMPK</shortName>
    </alternativeName>
</protein>
<reference key="1">
    <citation type="journal article" date="2000" name="Nature">
        <title>DNA sequence of both chromosomes of the cholera pathogen Vibrio cholerae.</title>
        <authorList>
            <person name="Heidelberg J.F."/>
            <person name="Eisen J.A."/>
            <person name="Nelson W.C."/>
            <person name="Clayton R.A."/>
            <person name="Gwinn M.L."/>
            <person name="Dodson R.J."/>
            <person name="Haft D.H."/>
            <person name="Hickey E.K."/>
            <person name="Peterson J.D."/>
            <person name="Umayam L.A."/>
            <person name="Gill S.R."/>
            <person name="Nelson K.E."/>
            <person name="Read T.D."/>
            <person name="Tettelin H."/>
            <person name="Richardson D.L."/>
            <person name="Ermolaeva M.D."/>
            <person name="Vamathevan J.J."/>
            <person name="Bass S."/>
            <person name="Qin H."/>
            <person name="Dragoi I."/>
            <person name="Sellers P."/>
            <person name="McDonald L.A."/>
            <person name="Utterback T.R."/>
            <person name="Fleischmann R.D."/>
            <person name="Nierman W.C."/>
            <person name="White O."/>
            <person name="Salzberg S.L."/>
            <person name="Smith H.O."/>
            <person name="Colwell R.R."/>
            <person name="Mekalanos J.J."/>
            <person name="Venter J.C."/>
            <person name="Fraser C.M."/>
        </authorList>
    </citation>
    <scope>NUCLEOTIDE SEQUENCE [LARGE SCALE GENOMIC DNA]</scope>
    <source>
        <strain>ATCC 39315 / El Tor Inaba N16961</strain>
    </source>
</reference>
<dbReference type="EC" id="2.7.4.22" evidence="1"/>
<dbReference type="EMBL" id="AE003852">
    <property type="protein sequence ID" value="AAF95402.1"/>
    <property type="molecule type" value="Genomic_DNA"/>
</dbReference>
<dbReference type="PIR" id="H82099">
    <property type="entry name" value="H82099"/>
</dbReference>
<dbReference type="RefSeq" id="NP_231889.1">
    <property type="nucleotide sequence ID" value="NC_002505.1"/>
</dbReference>
<dbReference type="RefSeq" id="WP_000210548.1">
    <property type="nucleotide sequence ID" value="NZ_LT906614.1"/>
</dbReference>
<dbReference type="SMR" id="Q9KPV4"/>
<dbReference type="STRING" id="243277.VC_2258"/>
<dbReference type="DNASU" id="2613180"/>
<dbReference type="EnsemblBacteria" id="AAF95402">
    <property type="protein sequence ID" value="AAF95402"/>
    <property type="gene ID" value="VC_2258"/>
</dbReference>
<dbReference type="GeneID" id="69719117"/>
<dbReference type="KEGG" id="vch:VC_2258"/>
<dbReference type="PATRIC" id="fig|243277.26.peg.2154"/>
<dbReference type="eggNOG" id="COG0528">
    <property type="taxonomic scope" value="Bacteria"/>
</dbReference>
<dbReference type="HOGENOM" id="CLU_033861_0_0_6"/>
<dbReference type="UniPathway" id="UPA00159">
    <property type="reaction ID" value="UER00275"/>
</dbReference>
<dbReference type="Proteomes" id="UP000000584">
    <property type="component" value="Chromosome 1"/>
</dbReference>
<dbReference type="GO" id="GO:0005829">
    <property type="term" value="C:cytosol"/>
    <property type="evidence" value="ECO:0000318"/>
    <property type="project" value="GO_Central"/>
</dbReference>
<dbReference type="GO" id="GO:0005524">
    <property type="term" value="F:ATP binding"/>
    <property type="evidence" value="ECO:0007669"/>
    <property type="project" value="UniProtKB-KW"/>
</dbReference>
<dbReference type="GO" id="GO:0033862">
    <property type="term" value="F:UMP kinase activity"/>
    <property type="evidence" value="ECO:0000318"/>
    <property type="project" value="GO_Central"/>
</dbReference>
<dbReference type="GO" id="GO:0044210">
    <property type="term" value="P:'de novo' CTP biosynthetic process"/>
    <property type="evidence" value="ECO:0007669"/>
    <property type="project" value="UniProtKB-UniRule"/>
</dbReference>
<dbReference type="GO" id="GO:0006225">
    <property type="term" value="P:UDP biosynthetic process"/>
    <property type="evidence" value="ECO:0000318"/>
    <property type="project" value="GO_Central"/>
</dbReference>
<dbReference type="CDD" id="cd04254">
    <property type="entry name" value="AAK_UMPK-PyrH-Ec"/>
    <property type="match status" value="1"/>
</dbReference>
<dbReference type="FunFam" id="3.40.1160.10:FF:000001">
    <property type="entry name" value="Uridylate kinase"/>
    <property type="match status" value="1"/>
</dbReference>
<dbReference type="Gene3D" id="3.40.1160.10">
    <property type="entry name" value="Acetylglutamate kinase-like"/>
    <property type="match status" value="1"/>
</dbReference>
<dbReference type="HAMAP" id="MF_01220_B">
    <property type="entry name" value="PyrH_B"/>
    <property type="match status" value="1"/>
</dbReference>
<dbReference type="InterPro" id="IPR036393">
    <property type="entry name" value="AceGlu_kinase-like_sf"/>
</dbReference>
<dbReference type="InterPro" id="IPR001048">
    <property type="entry name" value="Asp/Glu/Uridylate_kinase"/>
</dbReference>
<dbReference type="InterPro" id="IPR011817">
    <property type="entry name" value="Uridylate_kinase"/>
</dbReference>
<dbReference type="InterPro" id="IPR015963">
    <property type="entry name" value="Uridylate_kinase_bac"/>
</dbReference>
<dbReference type="NCBIfam" id="TIGR02075">
    <property type="entry name" value="pyrH_bact"/>
    <property type="match status" value="1"/>
</dbReference>
<dbReference type="PANTHER" id="PTHR42833">
    <property type="entry name" value="URIDYLATE KINASE"/>
    <property type="match status" value="1"/>
</dbReference>
<dbReference type="PANTHER" id="PTHR42833:SF4">
    <property type="entry name" value="URIDYLATE KINASE PUMPKIN, CHLOROPLASTIC"/>
    <property type="match status" value="1"/>
</dbReference>
<dbReference type="Pfam" id="PF00696">
    <property type="entry name" value="AA_kinase"/>
    <property type="match status" value="1"/>
</dbReference>
<dbReference type="PIRSF" id="PIRSF005650">
    <property type="entry name" value="Uridylate_kin"/>
    <property type="match status" value="1"/>
</dbReference>
<dbReference type="SUPFAM" id="SSF53633">
    <property type="entry name" value="Carbamate kinase-like"/>
    <property type="match status" value="1"/>
</dbReference>
<gene>
    <name evidence="1" type="primary">pyrH</name>
    <name type="ordered locus">VC_2258</name>
</gene>
<feature type="chain" id="PRO_0000143903" description="Uridylate kinase">
    <location>
        <begin position="1"/>
        <end position="243"/>
    </location>
</feature>
<feature type="region of interest" description="Involved in allosteric activation by GTP" evidence="1">
    <location>
        <begin position="23"/>
        <end position="28"/>
    </location>
</feature>
<feature type="binding site" evidence="1">
    <location>
        <begin position="15"/>
        <end position="18"/>
    </location>
    <ligand>
        <name>ATP</name>
        <dbReference type="ChEBI" id="CHEBI:30616"/>
    </ligand>
</feature>
<feature type="binding site" evidence="1">
    <location>
        <position position="57"/>
    </location>
    <ligand>
        <name>UMP</name>
        <dbReference type="ChEBI" id="CHEBI:57865"/>
    </ligand>
</feature>
<feature type="binding site" evidence="1">
    <location>
        <position position="58"/>
    </location>
    <ligand>
        <name>ATP</name>
        <dbReference type="ChEBI" id="CHEBI:30616"/>
    </ligand>
</feature>
<feature type="binding site" evidence="1">
    <location>
        <position position="62"/>
    </location>
    <ligand>
        <name>ATP</name>
        <dbReference type="ChEBI" id="CHEBI:30616"/>
    </ligand>
</feature>
<feature type="binding site" evidence="1">
    <location>
        <position position="77"/>
    </location>
    <ligand>
        <name>UMP</name>
        <dbReference type="ChEBI" id="CHEBI:57865"/>
    </ligand>
</feature>
<feature type="binding site" evidence="1">
    <location>
        <begin position="138"/>
        <end position="145"/>
    </location>
    <ligand>
        <name>UMP</name>
        <dbReference type="ChEBI" id="CHEBI:57865"/>
    </ligand>
</feature>
<feature type="binding site" evidence="1">
    <location>
        <position position="165"/>
    </location>
    <ligand>
        <name>ATP</name>
        <dbReference type="ChEBI" id="CHEBI:30616"/>
    </ligand>
</feature>
<feature type="binding site" evidence="1">
    <location>
        <position position="171"/>
    </location>
    <ligand>
        <name>ATP</name>
        <dbReference type="ChEBI" id="CHEBI:30616"/>
    </ligand>
</feature>
<feature type="binding site" evidence="1">
    <location>
        <position position="174"/>
    </location>
    <ligand>
        <name>ATP</name>
        <dbReference type="ChEBI" id="CHEBI:30616"/>
    </ligand>
</feature>